<comment type="function">
    <text evidence="2 7">Calcium-dependent lectin that mediates cell adhesion by binding to glycoproteins on neighboring cells. Mediates the adherence of lymphocytes to endothelial cells of high endothelial venules in peripheral lymph nodes (PubMed:1693096). Promotes initial tethering and rolling of leukocytes in endothelia (By similarity).</text>
</comment>
<comment type="subunit">
    <text evidence="2">Interaction with SELPLG/PSGL1 and PODXL2 is required for promoting recruitment and rolling of leukocytes. This interaction is dependent on the sialyl Lewis X glycan modification of SELPLG and PODXL2, and tyrosine sulfation modifications of SELPLG. Sulfation on 'Tyr-51' of SELPLG is important for L-selectin binding.</text>
</comment>
<comment type="subcellular location">
    <subcellularLocation>
        <location evidence="7 8">Cell membrane</location>
        <topology evidence="11">Single-pass type I membrane protein</topology>
    </subcellularLocation>
</comment>
<comment type="tissue specificity">
    <text evidence="8">Predominantly expressed in lymphoid tissue.</text>
</comment>
<comment type="PTM">
    <text evidence="2">N-glycosylated.</text>
</comment>
<comment type="similarity">
    <text evidence="11">Belongs to the selectin/LECAM family.</text>
</comment>
<comment type="online information" name="Functional Glycomics Gateway - Glycan Binding">
    <link uri="http://www.functionalglycomics.org/glycomics/GBPServlet?&amp;operationType=view&amp;cbpId=cbp_mou_Ctlect_172"/>
    <text>L-selectin</text>
</comment>
<proteinExistence type="evidence at protein level"/>
<evidence type="ECO:0000250" key="1"/>
<evidence type="ECO:0000250" key="2">
    <source>
        <dbReference type="UniProtKB" id="P14151"/>
    </source>
</evidence>
<evidence type="ECO:0000255" key="3"/>
<evidence type="ECO:0000255" key="4">
    <source>
        <dbReference type="PROSITE-ProRule" id="PRU00040"/>
    </source>
</evidence>
<evidence type="ECO:0000255" key="5">
    <source>
        <dbReference type="PROSITE-ProRule" id="PRU00076"/>
    </source>
</evidence>
<evidence type="ECO:0000255" key="6">
    <source>
        <dbReference type="PROSITE-ProRule" id="PRU00302"/>
    </source>
</evidence>
<evidence type="ECO:0000269" key="7">
    <source>
    </source>
</evidence>
<evidence type="ECO:0000269" key="8">
    <source>
    </source>
</evidence>
<evidence type="ECO:0000303" key="9">
    <source>
    </source>
</evidence>
<evidence type="ECO:0000303" key="10">
    <source>
    </source>
</evidence>
<evidence type="ECO:0000305" key="11"/>
<accession>P18337</accession>
<keyword id="KW-0106">Calcium</keyword>
<keyword id="KW-0130">Cell adhesion</keyword>
<keyword id="KW-1003">Cell membrane</keyword>
<keyword id="KW-1015">Disulfide bond</keyword>
<keyword id="KW-0245">EGF-like domain</keyword>
<keyword id="KW-0325">Glycoprotein</keyword>
<keyword id="KW-0430">Lectin</keyword>
<keyword id="KW-0472">Membrane</keyword>
<keyword id="KW-0479">Metal-binding</keyword>
<keyword id="KW-1185">Reference proteome</keyword>
<keyword id="KW-0677">Repeat</keyword>
<keyword id="KW-0732">Signal</keyword>
<keyword id="KW-0768">Sushi</keyword>
<keyword id="KW-0812">Transmembrane</keyword>
<keyword id="KW-1133">Transmembrane helix</keyword>
<sequence>MVFPWRCEGTYWGSRNILKLWVWTLLCCDFLIHHGTHCWTYHYSEKPMNWENARKFCKQNYTDLVAIQNKREIEYLENTLPKSPYYYWIGIRKIGKMWTWVGTNKTLTKEAENWGAGEPNNKKSKEDCVEIYIKRERDSGKWNDDACHKRKAALCYTASCQPGSCNGRGECVETINNHTCICDAGYYGPQCQYVVQCEPLEAPELGTMDCIHPLGNFSFQSKCAFNCSEGRELLGTAETQCGASGNWSSPEPICQVVQCEPLEAPELGTMDCIHPLGNFSFQSKCAFNCSEGRELLGTAETQCGASGNWSSPEPICQETNRSFSKIKEGDYNPLFIPVAVMVTAFSGLAFLIWLARRLKKGKKSQERMDDPY</sequence>
<dbReference type="EMBL" id="X14772">
    <property type="protein sequence ID" value="CAA32880.1"/>
    <property type="molecule type" value="mRNA"/>
</dbReference>
<dbReference type="EMBL" id="M36005">
    <property type="protein sequence ID" value="AAA39722.1"/>
    <property type="molecule type" value="mRNA"/>
</dbReference>
<dbReference type="EMBL" id="M36058">
    <property type="protein sequence ID" value="AAA39723.1"/>
    <property type="molecule type" value="mRNA"/>
</dbReference>
<dbReference type="EMBL" id="M25324">
    <property type="protein sequence ID" value="AAA39431.1"/>
    <property type="molecule type" value="mRNA"/>
</dbReference>
<dbReference type="EMBL" id="AH003204">
    <property type="protein sequence ID" value="AAA75651.1"/>
    <property type="molecule type" value="Genomic_DNA"/>
</dbReference>
<dbReference type="EMBL" id="BC052681">
    <property type="protein sequence ID" value="AAH52681.1"/>
    <property type="molecule type" value="mRNA"/>
</dbReference>
<dbReference type="CCDS" id="CCDS35753.1"/>
<dbReference type="PIR" id="A32375">
    <property type="entry name" value="A32375"/>
</dbReference>
<dbReference type="RefSeq" id="NP_035476.1">
    <property type="nucleotide sequence ID" value="NM_011346.2"/>
</dbReference>
<dbReference type="SMR" id="P18337"/>
<dbReference type="BioGRID" id="203158">
    <property type="interactions" value="2"/>
</dbReference>
<dbReference type="FunCoup" id="P18337">
    <property type="interactions" value="354"/>
</dbReference>
<dbReference type="STRING" id="10090.ENSMUSP00000027871"/>
<dbReference type="BindingDB" id="P18337"/>
<dbReference type="ChEMBL" id="CHEMBL3162"/>
<dbReference type="GlyCosmos" id="P18337">
    <property type="glycosylation" value="10 sites, No reported glycans"/>
</dbReference>
<dbReference type="GlyGen" id="P18337">
    <property type="glycosylation" value="10 sites"/>
</dbReference>
<dbReference type="iPTMnet" id="P18337"/>
<dbReference type="PhosphoSitePlus" id="P18337"/>
<dbReference type="CPTAC" id="non-CPTAC-3589"/>
<dbReference type="jPOST" id="P18337"/>
<dbReference type="PaxDb" id="10090-ENSMUSP00000027871"/>
<dbReference type="PeptideAtlas" id="P18337"/>
<dbReference type="ProteomicsDB" id="290201"/>
<dbReference type="Antibodypedia" id="3683">
    <property type="antibodies" value="1648 antibodies from 49 providers"/>
</dbReference>
<dbReference type="DNASU" id="20343"/>
<dbReference type="Ensembl" id="ENSMUST00000027871.13">
    <property type="protein sequence ID" value="ENSMUSP00000027871.8"/>
    <property type="gene ID" value="ENSMUSG00000026581.15"/>
</dbReference>
<dbReference type="GeneID" id="20343"/>
<dbReference type="KEGG" id="mmu:20343"/>
<dbReference type="UCSC" id="uc007dhy.2">
    <property type="organism name" value="mouse"/>
</dbReference>
<dbReference type="AGR" id="MGI:98279"/>
<dbReference type="CTD" id="6402"/>
<dbReference type="MGI" id="MGI:98279">
    <property type="gene designation" value="Sell"/>
</dbReference>
<dbReference type="VEuPathDB" id="HostDB:ENSMUSG00000026581"/>
<dbReference type="eggNOG" id="KOG4297">
    <property type="taxonomic scope" value="Eukaryota"/>
</dbReference>
<dbReference type="GeneTree" id="ENSGT00940000162076"/>
<dbReference type="HOGENOM" id="CLU_065067_0_0_1"/>
<dbReference type="InParanoid" id="P18337"/>
<dbReference type="OMA" id="EPSCQVI"/>
<dbReference type="PhylomeDB" id="P18337"/>
<dbReference type="TreeFam" id="TF326910"/>
<dbReference type="Reactome" id="R-MMU-198933">
    <property type="pathway name" value="Immunoregulatory interactions between a Lymphoid and a non-Lymphoid cell"/>
</dbReference>
<dbReference type="Reactome" id="R-MMU-202733">
    <property type="pathway name" value="Cell surface interactions at the vascular wall"/>
</dbReference>
<dbReference type="Reactome" id="R-MMU-6798695">
    <property type="pathway name" value="Neutrophil degranulation"/>
</dbReference>
<dbReference type="BioGRID-ORCS" id="20343">
    <property type="hits" value="1 hit in 80 CRISPR screens"/>
</dbReference>
<dbReference type="ChiTaRS" id="Sell">
    <property type="organism name" value="mouse"/>
</dbReference>
<dbReference type="PRO" id="PR:P18337"/>
<dbReference type="Proteomes" id="UP000000589">
    <property type="component" value="Chromosome 1"/>
</dbReference>
<dbReference type="RNAct" id="P18337">
    <property type="molecule type" value="protein"/>
</dbReference>
<dbReference type="Bgee" id="ENSMUSG00000026581">
    <property type="expression patterns" value="Expressed in granulocyte and 51 other cell types or tissues"/>
</dbReference>
<dbReference type="ExpressionAtlas" id="P18337">
    <property type="expression patterns" value="baseline and differential"/>
</dbReference>
<dbReference type="GO" id="GO:0009986">
    <property type="term" value="C:cell surface"/>
    <property type="evidence" value="ECO:0000314"/>
    <property type="project" value="MGI"/>
</dbReference>
<dbReference type="GO" id="GO:0009897">
    <property type="term" value="C:external side of plasma membrane"/>
    <property type="evidence" value="ECO:0000314"/>
    <property type="project" value="MGI"/>
</dbReference>
<dbReference type="GO" id="GO:0005886">
    <property type="term" value="C:plasma membrane"/>
    <property type="evidence" value="ECO:0000314"/>
    <property type="project" value="MGI"/>
</dbReference>
<dbReference type="GO" id="GO:0005509">
    <property type="term" value="F:calcium ion binding"/>
    <property type="evidence" value="ECO:0000250"/>
    <property type="project" value="UniProtKB"/>
</dbReference>
<dbReference type="GO" id="GO:0050839">
    <property type="term" value="F:cell adhesion molecule binding"/>
    <property type="evidence" value="ECO:0000353"/>
    <property type="project" value="MGI"/>
</dbReference>
<dbReference type="GO" id="GO:0070492">
    <property type="term" value="F:oligosaccharide binding"/>
    <property type="evidence" value="ECO:0000250"/>
    <property type="project" value="UniProtKB"/>
</dbReference>
<dbReference type="GO" id="GO:0016339">
    <property type="term" value="P:calcium-dependent cell-cell adhesion via plasma membrane cell adhesion molecules"/>
    <property type="evidence" value="ECO:0000250"/>
    <property type="project" value="UniProtKB"/>
</dbReference>
<dbReference type="GO" id="GO:0050901">
    <property type="term" value="P:leukocyte tethering or rolling"/>
    <property type="evidence" value="ECO:0000250"/>
    <property type="project" value="UniProtKB"/>
</dbReference>
<dbReference type="GO" id="GO:0033198">
    <property type="term" value="P:response to ATP"/>
    <property type="evidence" value="ECO:0000314"/>
    <property type="project" value="MGI"/>
</dbReference>
<dbReference type="CDD" id="cd00033">
    <property type="entry name" value="CCP"/>
    <property type="match status" value="2"/>
</dbReference>
<dbReference type="CDD" id="cd00054">
    <property type="entry name" value="EGF_CA"/>
    <property type="match status" value="1"/>
</dbReference>
<dbReference type="FunFam" id="3.10.100.10:FF:000007">
    <property type="entry name" value="L-selectin"/>
    <property type="match status" value="1"/>
</dbReference>
<dbReference type="FunFam" id="2.10.25.10:FF:000176">
    <property type="entry name" value="Selectin P"/>
    <property type="match status" value="1"/>
</dbReference>
<dbReference type="FunFam" id="2.10.70.10:FF:000001">
    <property type="entry name" value="Selectin P"/>
    <property type="match status" value="2"/>
</dbReference>
<dbReference type="Gene3D" id="2.10.70.10">
    <property type="entry name" value="Complement Module, domain 1"/>
    <property type="match status" value="2"/>
</dbReference>
<dbReference type="Gene3D" id="3.10.100.10">
    <property type="entry name" value="Mannose-Binding Protein A, subunit A"/>
    <property type="match status" value="1"/>
</dbReference>
<dbReference type="InterPro" id="IPR001304">
    <property type="entry name" value="C-type_lectin-like"/>
</dbReference>
<dbReference type="InterPro" id="IPR016186">
    <property type="entry name" value="C-type_lectin-like/link_sf"/>
</dbReference>
<dbReference type="InterPro" id="IPR018378">
    <property type="entry name" value="C-type_lectin_CS"/>
</dbReference>
<dbReference type="InterPro" id="IPR050350">
    <property type="entry name" value="Compl-Cell_Adhes-Reg"/>
</dbReference>
<dbReference type="InterPro" id="IPR016187">
    <property type="entry name" value="CTDL_fold"/>
</dbReference>
<dbReference type="InterPro" id="IPR000742">
    <property type="entry name" value="EGF-like_dom"/>
</dbReference>
<dbReference type="InterPro" id="IPR016348">
    <property type="entry name" value="L-selectin"/>
</dbReference>
<dbReference type="InterPro" id="IPR002396">
    <property type="entry name" value="Selectin_superfamily"/>
</dbReference>
<dbReference type="InterPro" id="IPR035976">
    <property type="entry name" value="Sushi/SCR/CCP_sf"/>
</dbReference>
<dbReference type="InterPro" id="IPR000436">
    <property type="entry name" value="Sushi_SCR_CCP_dom"/>
</dbReference>
<dbReference type="PANTHER" id="PTHR19325">
    <property type="entry name" value="COMPLEMENT COMPONENT-RELATED SUSHI DOMAIN-CONTAINING"/>
    <property type="match status" value="1"/>
</dbReference>
<dbReference type="PANTHER" id="PTHR19325:SF543">
    <property type="entry name" value="L-SELECTIN"/>
    <property type="match status" value="1"/>
</dbReference>
<dbReference type="Pfam" id="PF00059">
    <property type="entry name" value="Lectin_C"/>
    <property type="match status" value="1"/>
</dbReference>
<dbReference type="Pfam" id="PF00084">
    <property type="entry name" value="Sushi"/>
    <property type="match status" value="2"/>
</dbReference>
<dbReference type="PIRSF" id="PIRSF002421">
    <property type="entry name" value="L-selectin"/>
    <property type="match status" value="1"/>
</dbReference>
<dbReference type="PRINTS" id="PR00343">
    <property type="entry name" value="SELECTIN"/>
</dbReference>
<dbReference type="SMART" id="SM00032">
    <property type="entry name" value="CCP"/>
    <property type="match status" value="2"/>
</dbReference>
<dbReference type="SMART" id="SM00034">
    <property type="entry name" value="CLECT"/>
    <property type="match status" value="1"/>
</dbReference>
<dbReference type="SUPFAM" id="SSF56436">
    <property type="entry name" value="C-type lectin-like"/>
    <property type="match status" value="1"/>
</dbReference>
<dbReference type="SUPFAM" id="SSF57535">
    <property type="entry name" value="Complement control module/SCR domain"/>
    <property type="match status" value="2"/>
</dbReference>
<dbReference type="SUPFAM" id="SSF57196">
    <property type="entry name" value="EGF/Laminin"/>
    <property type="match status" value="1"/>
</dbReference>
<dbReference type="PROSITE" id="PS00615">
    <property type="entry name" value="C_TYPE_LECTIN_1"/>
    <property type="match status" value="1"/>
</dbReference>
<dbReference type="PROSITE" id="PS50041">
    <property type="entry name" value="C_TYPE_LECTIN_2"/>
    <property type="match status" value="1"/>
</dbReference>
<dbReference type="PROSITE" id="PS00022">
    <property type="entry name" value="EGF_1"/>
    <property type="match status" value="1"/>
</dbReference>
<dbReference type="PROSITE" id="PS01186">
    <property type="entry name" value="EGF_2"/>
    <property type="match status" value="1"/>
</dbReference>
<dbReference type="PROSITE" id="PS50026">
    <property type="entry name" value="EGF_3"/>
    <property type="match status" value="1"/>
</dbReference>
<dbReference type="PROSITE" id="PS50923">
    <property type="entry name" value="SUSHI"/>
    <property type="match status" value="2"/>
</dbReference>
<gene>
    <name type="primary">Sell</name>
    <name type="synonym">Lnhr</name>
    <name type="synonym">Ly-22</name>
    <name type="synonym">Ly22</name>
</gene>
<protein>
    <recommendedName>
        <fullName>L-selectin</fullName>
    </recommendedName>
    <alternativeName>
        <fullName>CD62 antigen-like family member L</fullName>
    </alternativeName>
    <alternativeName>
        <fullName>Leukocyte adhesion molecule 1</fullName>
        <shortName>LAM-1</shortName>
    </alternativeName>
    <alternativeName>
        <fullName>Leukocyte-endothelial cell adhesion molecule 1</fullName>
        <shortName>LECAM1</shortName>
    </alternativeName>
    <alternativeName>
        <fullName evidence="10">Lymph node homing receptor</fullName>
    </alternativeName>
    <alternativeName>
        <fullName evidence="9">Lymphocyte antigen 22</fullName>
        <shortName evidence="9">Ly-22</shortName>
    </alternativeName>
    <alternativeName>
        <fullName>Lymphocyte surface MEL-14 antigen</fullName>
    </alternativeName>
    <cdAntigenName>CD62L</cdAntigenName>
</protein>
<feature type="signal peptide">
    <location>
        <begin position="1"/>
        <end position="28"/>
    </location>
</feature>
<feature type="propeptide" id="PRO_0000017479">
    <location>
        <begin position="29"/>
        <end position="38"/>
    </location>
</feature>
<feature type="chain" id="PRO_0000017480" description="L-selectin">
    <location>
        <begin position="39"/>
        <end position="372"/>
    </location>
</feature>
<feature type="topological domain" description="Extracellular" evidence="3">
    <location>
        <begin position="39"/>
        <end position="332"/>
    </location>
</feature>
<feature type="transmembrane region" description="Helical" evidence="3">
    <location>
        <begin position="333"/>
        <end position="355"/>
    </location>
</feature>
<feature type="topological domain" description="Cytoplasmic" evidence="3">
    <location>
        <begin position="356"/>
        <end position="372"/>
    </location>
</feature>
<feature type="domain" description="C-type lectin" evidence="4">
    <location>
        <begin position="55"/>
        <end position="155"/>
    </location>
</feature>
<feature type="domain" description="EGF-like" evidence="5">
    <location>
        <begin position="156"/>
        <end position="192"/>
    </location>
</feature>
<feature type="domain" description="Sushi 1" evidence="6">
    <location>
        <begin position="195"/>
        <end position="256"/>
    </location>
</feature>
<feature type="domain" description="Sushi 2" evidence="6">
    <location>
        <begin position="257"/>
        <end position="318"/>
    </location>
</feature>
<feature type="binding site" evidence="2">
    <location>
        <position position="118"/>
    </location>
    <ligand>
        <name>Ca(2+)</name>
        <dbReference type="ChEBI" id="CHEBI:29108"/>
    </ligand>
</feature>
<feature type="binding site" evidence="2">
    <location>
        <position position="120"/>
    </location>
    <ligand>
        <name>Ca(2+)</name>
        <dbReference type="ChEBI" id="CHEBI:29108"/>
    </ligand>
</feature>
<feature type="binding site" evidence="2">
    <location>
        <position position="126"/>
    </location>
    <ligand>
        <name>Ca(2+)</name>
        <dbReference type="ChEBI" id="CHEBI:29108"/>
    </ligand>
</feature>
<feature type="binding site" evidence="2">
    <location>
        <position position="143"/>
    </location>
    <ligand>
        <name>Ca(2+)</name>
        <dbReference type="ChEBI" id="CHEBI:29108"/>
    </ligand>
</feature>
<feature type="binding site" evidence="2">
    <location>
        <position position="144"/>
    </location>
    <ligand>
        <name>Ca(2+)</name>
        <dbReference type="ChEBI" id="CHEBI:29108"/>
    </ligand>
</feature>
<feature type="glycosylation site" description="N-linked (GlcNAc...) asparagine" evidence="3">
    <location>
        <position position="60"/>
    </location>
</feature>
<feature type="glycosylation site" description="N-linked (GlcNAc...) asparagine" evidence="3">
    <location>
        <position position="104"/>
    </location>
</feature>
<feature type="glycosylation site" description="N-linked (GlcNAc...) asparagine" evidence="3">
    <location>
        <position position="177"/>
    </location>
</feature>
<feature type="glycosylation site" description="N-linked (GlcNAc...) asparagine" evidence="3">
    <location>
        <position position="216"/>
    </location>
</feature>
<feature type="glycosylation site" description="N-linked (GlcNAc...) asparagine" evidence="3">
    <location>
        <position position="226"/>
    </location>
</feature>
<feature type="glycosylation site" description="N-linked (GlcNAc...) asparagine" evidence="3">
    <location>
        <position position="246"/>
    </location>
</feature>
<feature type="glycosylation site" description="N-linked (GlcNAc...) asparagine" evidence="3">
    <location>
        <position position="278"/>
    </location>
</feature>
<feature type="glycosylation site" description="N-linked (GlcNAc...) asparagine" evidence="3">
    <location>
        <position position="288"/>
    </location>
</feature>
<feature type="glycosylation site" description="N-linked (GlcNAc...) asparagine" evidence="3">
    <location>
        <position position="308"/>
    </location>
</feature>
<feature type="glycosylation site" description="N-linked (GlcNAc...) asparagine" evidence="3">
    <location>
        <position position="320"/>
    </location>
</feature>
<feature type="disulfide bond" evidence="2">
    <location>
        <begin position="57"/>
        <end position="155"/>
    </location>
</feature>
<feature type="disulfide bond" evidence="2">
    <location>
        <begin position="128"/>
        <end position="160"/>
    </location>
</feature>
<feature type="disulfide bond" evidence="2">
    <location>
        <begin position="128"/>
        <end position="147"/>
    </location>
</feature>
<feature type="disulfide bond" evidence="2">
    <location>
        <begin position="160"/>
        <end position="171"/>
    </location>
</feature>
<feature type="disulfide bond" evidence="1">
    <location>
        <begin position="165"/>
        <end position="180"/>
    </location>
</feature>
<feature type="disulfide bond" evidence="2">
    <location>
        <begin position="182"/>
        <end position="191"/>
    </location>
</feature>
<feature type="disulfide bond" evidence="1">
    <location>
        <begin position="197"/>
        <end position="241"/>
    </location>
</feature>
<feature type="disulfide bond" evidence="1">
    <location>
        <begin position="227"/>
        <end position="254"/>
    </location>
</feature>
<feature type="disulfide bond" evidence="1">
    <location>
        <begin position="259"/>
        <end position="303"/>
    </location>
</feature>
<feature type="disulfide bond" evidence="1">
    <location>
        <begin position="289"/>
        <end position="316"/>
    </location>
</feature>
<feature type="sequence conflict" description="In Ref. 5; AAA75651." evidence="11" ref="5">
    <original>I</original>
    <variation>T</variation>
    <location>
        <position position="32"/>
    </location>
</feature>
<organism>
    <name type="scientific">Mus musculus</name>
    <name type="common">Mouse</name>
    <dbReference type="NCBI Taxonomy" id="10090"/>
    <lineage>
        <taxon>Eukaryota</taxon>
        <taxon>Metazoa</taxon>
        <taxon>Chordata</taxon>
        <taxon>Craniata</taxon>
        <taxon>Vertebrata</taxon>
        <taxon>Euteleostomi</taxon>
        <taxon>Mammalia</taxon>
        <taxon>Eutheria</taxon>
        <taxon>Euarchontoglires</taxon>
        <taxon>Glires</taxon>
        <taxon>Rodentia</taxon>
        <taxon>Myomorpha</taxon>
        <taxon>Muroidea</taxon>
        <taxon>Muridae</taxon>
        <taxon>Murinae</taxon>
        <taxon>Mus</taxon>
        <taxon>Mus</taxon>
    </lineage>
</organism>
<reference key="1">
    <citation type="journal article" date="1989" name="Science">
        <title>Mouse lymph node homing receptor cDNA clone encodes a glycoprotein revealing tandem interaction domains.</title>
        <authorList>
            <person name="Siegelman M.H."/>
            <person name="van de Rijn M."/>
            <person name="Weissman I.L."/>
        </authorList>
    </citation>
    <scope>NUCLEOTIDE SEQUENCE [MRNA]</scope>
    <scope>SUBCELLULAR LOCATION</scope>
    <scope>TISSUE SPECIFICITY</scope>
    <source>
        <tissue>Lymph node</tissue>
    </source>
</reference>
<reference key="2">
    <citation type="journal article" date="1990" name="Cell">
        <title>The mouse lymph node homing receptor is identical with the lymphocyte cell surface marker Ly-22: role of the EGF domain in endothelial binding.</title>
        <authorList>
            <person name="Siegelman M.H."/>
            <person name="Cheng I.C."/>
            <person name="Weissman I.L."/>
            <person name="Wakeland E.K."/>
        </authorList>
    </citation>
    <scope>NUCLEOTIDE SEQUENCE [MRNA]</scope>
    <scope>SUBCELLULAR LOCATION</scope>
    <scope>FUNCTION</scope>
</reference>
<reference key="3">
    <citation type="journal article" date="1989" name="Cell">
        <title>Cloning of a lymphocyte homing receptor reveals a lectin domain.</title>
        <authorList>
            <person name="Lasky L.A."/>
            <person name="Singer M.S."/>
            <person name="Yednock T.A."/>
            <person name="Dowbenko D."/>
            <person name="Fennie C."/>
            <person name="Rodriguez H."/>
            <person name="Nguyen T."/>
            <person name="Stachel S."/>
            <person name="Rosen S.D."/>
        </authorList>
    </citation>
    <scope>NUCLEOTIDE SEQUENCE [MRNA]</scope>
    <source>
        <tissue>Spleen</tissue>
    </source>
</reference>
<reference key="4">
    <citation type="journal article" date="2004" name="Genome Res.">
        <title>The status, quality, and expansion of the NIH full-length cDNA project: the Mammalian Gene Collection (MGC).</title>
        <authorList>
            <consortium name="The MGC Project Team"/>
        </authorList>
    </citation>
    <scope>NUCLEOTIDE SEQUENCE [LARGE SCALE MRNA]</scope>
    <source>
        <strain>C57BL/6J</strain>
        <tissue>Hematopoietic</tissue>
    </source>
</reference>
<reference key="5">
    <citation type="journal article" date="1991" name="Genomics">
        <title>Characterization of the murine homing receptor gene reveals correspondence between protein domains and coding exons.</title>
        <authorList>
            <person name="Dowbenko D.J."/>
            <person name="Diep A."/>
            <person name="Taylor B.A."/>
            <person name="Lusis A.J."/>
            <person name="Lasky L.A."/>
        </authorList>
    </citation>
    <scope>NUCLEOTIDE SEQUENCE [GENOMIC DNA] OF 1-360</scope>
</reference>
<reference key="6">
    <citation type="journal article" date="2010" name="Cell">
        <title>A tissue-specific atlas of mouse protein phosphorylation and expression.</title>
        <authorList>
            <person name="Huttlin E.L."/>
            <person name="Jedrychowski M.P."/>
            <person name="Elias J.E."/>
            <person name="Goswami T."/>
            <person name="Rad R."/>
            <person name="Beausoleil S.A."/>
            <person name="Villen J."/>
            <person name="Haas W."/>
            <person name="Sowa M.E."/>
            <person name="Gygi S.P."/>
        </authorList>
    </citation>
    <scope>IDENTIFICATION BY MASS SPECTROMETRY [LARGE SCALE ANALYSIS]</scope>
    <source>
        <tissue>Spleen</tissue>
    </source>
</reference>
<name>LYAM1_MOUSE</name>